<reference key="1">
    <citation type="journal article" date="2007" name="J. Bacteriol.">
        <title>Genome sequence of Avery's virulent serotype 2 strain D39 of Streptococcus pneumoniae and comparison with that of unencapsulated laboratory strain R6.</title>
        <authorList>
            <person name="Lanie J.A."/>
            <person name="Ng W.-L."/>
            <person name="Kazmierczak K.M."/>
            <person name="Andrzejewski T.M."/>
            <person name="Davidsen T.M."/>
            <person name="Wayne K.J."/>
            <person name="Tettelin H."/>
            <person name="Glass J.I."/>
            <person name="Winkler M.E."/>
        </authorList>
    </citation>
    <scope>NUCLEOTIDE SEQUENCE [LARGE SCALE GENOMIC DNA]</scope>
    <source>
        <strain>D39 / NCTC 7466</strain>
    </source>
</reference>
<reference key="2">
    <citation type="journal article" date="2016" name="Mol. Microbiol.">
        <title>Suppression of a deletion mutation in the gene encoding essential PBP2b reveals a new lytic transglycosylase involved in peripheral peptidoglycan synthesis in Streptococcus pneumoniae D39.</title>
        <authorList>
            <person name="Tsui H.T."/>
            <person name="Zheng J.J."/>
            <person name="Magallon A.N."/>
            <person name="Ryan J.D."/>
            <person name="Yunck R."/>
            <person name="Rued B.E."/>
            <person name="Bernhardt T.G."/>
            <person name="Winkler M.E."/>
        </authorList>
    </citation>
    <scope>FUNCTION</scope>
    <scope>SUBCELLULAR LOCATION</scope>
    <scope>DOMAIN</scope>
    <scope>DISRUPTION PHENOTYPE</scope>
    <scope>MUTAGENESIS OF GLU-428 AND TYR-488</scope>
    <source>
        <strain>D39 / NCTC 7466</strain>
    </source>
</reference>
<keyword id="KW-1003">Cell membrane</keyword>
<keyword id="KW-0961">Cell wall biogenesis/degradation</keyword>
<keyword id="KW-0456">Lyase</keyword>
<keyword id="KW-0472">Membrane</keyword>
<keyword id="KW-1185">Reference proteome</keyword>
<keyword id="KW-0812">Transmembrane</keyword>
<keyword id="KW-1133">Transmembrane helix</keyword>
<accession>A0A0H2ZLQ1</accession>
<sequence>MSEKSREEEKLSFKEQILRDLEKVKGYDEVLKEDEAVVRTPANEPSAEELMADSLSTVEEIMRKAPTVPTHPSQGVPASPADEIQRETPGVPSHPSQDVPSSPAEESGSRPGPGPVRPKKLEREYNETPTRVAVSYTTAEKKAEQAGPETPTPATETVDIIRDTSRRSRREGAKPAKPKKEKKSHVKAFVISFLVFLALLSAGGYFGYQYVLDSLLPIDANSKKYVTVGIPEGSNVQEIGTTLEKAGLVKHGLIFSFYAKYKNYTDLKAGYYNLQKSMSTEDLLKELQKGGTDEPQEPVLATLTIPEGYTLDQIAQTVGQLQGDFKESLTAEAFLAKVQDETFISQAVAKYPTLLESLPVKDSGARYRLEGYLFPATYSIKESTTIESLIDEMLAAMDKNLSPYYSTIKSKNLTVNELLTIASLVEKEGAKTEDRKLIAGVFYNRLNRDMPLQSNIAILYAQGKLGQNISLAEDVAIDTNIDSPYNVYKNVGLMPGPVDSPSLDAIESSINQTKSDNLYFVADVTEGKVYYANNQEDHDRNVAEHVNSKLN</sequence>
<comment type="function">
    <text evidence="1 2 4">Functions as a peptidoglycan terminase that cleaves nascent peptidoglycan strands endolytically to terminate their elongation (By similarity). Involved in peripheral peptidoglycan (PG) synthesis (PubMed:26933838).</text>
</comment>
<comment type="catalytic activity">
    <reaction evidence="2">
        <text>a peptidoglycan chain = a peptidoglycan chain with N-acetyl-1,6-anhydromuramyl-[peptide] at the reducing end + a peptidoglycan chain with N-acetylglucosamine at the non-reducing end.</text>
        <dbReference type="EC" id="4.2.2.29"/>
    </reaction>
</comment>
<comment type="subcellular location">
    <subcellularLocation>
        <location evidence="2 7">Cell membrane</location>
        <topology evidence="2">Single-pass membrane protein</topology>
    </subcellularLocation>
    <text evidence="4">Localizes separately from FtsZ with the peripheral PG synthesis machine.</text>
</comment>
<comment type="domain">
    <text evidence="4">The cytoplasmic N-terminal region is not required for endolytic transglycosylase activity under normal culture conditions.</text>
</comment>
<comment type="disruption phenotype">
    <text evidence="4">Deletion or inactivation severely impairs growth in encapsulated and unencapsulated strains and leads to the formation of spherical shaped cells.</text>
</comment>
<comment type="miscellaneous">
    <text evidence="4">Peptidoglycan cleavage activity could not be detected in vitro under a variety of assay conditions, but a gene deletion can be complemented with E.coli mltG, leading to the conclusion that this gene is the functional homolog of the E.coli endolytic transglycosylase.</text>
</comment>
<comment type="similarity">
    <text evidence="2 6">Belongs to the transglycosylase MltG family.</text>
</comment>
<dbReference type="EC" id="4.2.2.29" evidence="1 2"/>
<dbReference type="EMBL" id="CP000410">
    <property type="protein sequence ID" value="ABJ53954.1"/>
    <property type="molecule type" value="Genomic_DNA"/>
</dbReference>
<dbReference type="RefSeq" id="WP_001291641.1">
    <property type="nucleotide sequence ID" value="NC_008533.2"/>
</dbReference>
<dbReference type="SMR" id="A0A0H2ZLQ1"/>
<dbReference type="PaxDb" id="373153-SPD_1346"/>
<dbReference type="KEGG" id="spd:SPD_1346"/>
<dbReference type="eggNOG" id="COG1559">
    <property type="taxonomic scope" value="Bacteria"/>
</dbReference>
<dbReference type="HOGENOM" id="CLU_025574_1_0_9"/>
<dbReference type="BioCyc" id="SPNE373153:G1G6V-1452-MONOMER"/>
<dbReference type="Proteomes" id="UP000001452">
    <property type="component" value="Chromosome"/>
</dbReference>
<dbReference type="GO" id="GO:0005886">
    <property type="term" value="C:plasma membrane"/>
    <property type="evidence" value="ECO:0007669"/>
    <property type="project" value="UniProtKB-SubCell"/>
</dbReference>
<dbReference type="GO" id="GO:0008932">
    <property type="term" value="F:lytic endotransglycosylase activity"/>
    <property type="evidence" value="ECO:0007669"/>
    <property type="project" value="UniProtKB-UniRule"/>
</dbReference>
<dbReference type="GO" id="GO:0071555">
    <property type="term" value="P:cell wall organization"/>
    <property type="evidence" value="ECO:0007669"/>
    <property type="project" value="UniProtKB-KW"/>
</dbReference>
<dbReference type="GO" id="GO:0009252">
    <property type="term" value="P:peptidoglycan biosynthetic process"/>
    <property type="evidence" value="ECO:0007669"/>
    <property type="project" value="UniProtKB-UniRule"/>
</dbReference>
<dbReference type="CDD" id="cd08010">
    <property type="entry name" value="MltG_like"/>
    <property type="match status" value="1"/>
</dbReference>
<dbReference type="Gene3D" id="3.30.1490.480">
    <property type="entry name" value="Endolytic murein transglycosylase"/>
    <property type="match status" value="1"/>
</dbReference>
<dbReference type="HAMAP" id="MF_02065">
    <property type="entry name" value="MltG"/>
    <property type="match status" value="1"/>
</dbReference>
<dbReference type="InterPro" id="IPR003770">
    <property type="entry name" value="MLTG-like"/>
</dbReference>
<dbReference type="NCBIfam" id="TIGR00247">
    <property type="entry name" value="endolytic transglycosylase MltG"/>
    <property type="match status" value="1"/>
</dbReference>
<dbReference type="PANTHER" id="PTHR30518">
    <property type="entry name" value="ENDOLYTIC MUREIN TRANSGLYCOSYLASE"/>
    <property type="match status" value="1"/>
</dbReference>
<dbReference type="PANTHER" id="PTHR30518:SF2">
    <property type="entry name" value="ENDOLYTIC MUREIN TRANSGLYCOSYLASE"/>
    <property type="match status" value="1"/>
</dbReference>
<dbReference type="Pfam" id="PF02618">
    <property type="entry name" value="YceG"/>
    <property type="match status" value="1"/>
</dbReference>
<proteinExistence type="evidence at protein level"/>
<organism>
    <name type="scientific">Streptococcus pneumoniae serotype 2 (strain D39 / NCTC 7466)</name>
    <dbReference type="NCBI Taxonomy" id="373153"/>
    <lineage>
        <taxon>Bacteria</taxon>
        <taxon>Bacillati</taxon>
        <taxon>Bacillota</taxon>
        <taxon>Bacilli</taxon>
        <taxon>Lactobacillales</taxon>
        <taxon>Streptococcaceae</taxon>
        <taxon>Streptococcus</taxon>
    </lineage>
</organism>
<name>MLTG_STRP2</name>
<evidence type="ECO:0000250" key="1">
    <source>
        <dbReference type="UniProtKB" id="P28306"/>
    </source>
</evidence>
<evidence type="ECO:0000255" key="2">
    <source>
        <dbReference type="HAMAP-Rule" id="MF_02065"/>
    </source>
</evidence>
<evidence type="ECO:0000256" key="3">
    <source>
        <dbReference type="SAM" id="MobiDB-lite"/>
    </source>
</evidence>
<evidence type="ECO:0000269" key="4">
    <source>
    </source>
</evidence>
<evidence type="ECO:0000303" key="5">
    <source>
    </source>
</evidence>
<evidence type="ECO:0000305" key="6"/>
<evidence type="ECO:0000305" key="7">
    <source>
    </source>
</evidence>
<evidence type="ECO:0000312" key="8">
    <source>
        <dbReference type="EMBL" id="ABJ53954.1"/>
    </source>
</evidence>
<gene>
    <name evidence="2 5" type="primary">mltG</name>
    <name evidence="8" type="ordered locus">SPD_1346</name>
</gene>
<feature type="chain" id="PRO_0000436707" description="Endolytic murein transglycosylase">
    <location>
        <begin position="1"/>
        <end position="551"/>
    </location>
</feature>
<feature type="topological domain" description="Cytoplasmic" evidence="7">
    <location>
        <begin position="1"/>
        <end position="187"/>
    </location>
</feature>
<feature type="transmembrane region" description="Helical" evidence="2">
    <location>
        <begin position="188"/>
        <end position="208"/>
    </location>
</feature>
<feature type="topological domain" description="Extracellular" evidence="7">
    <location>
        <begin position="209"/>
        <end position="551"/>
    </location>
</feature>
<feature type="region of interest" description="Disordered" evidence="3">
    <location>
        <begin position="38"/>
        <end position="180"/>
    </location>
</feature>
<feature type="compositionally biased region" description="Low complexity" evidence="3">
    <location>
        <begin position="100"/>
        <end position="110"/>
    </location>
</feature>
<feature type="compositionally biased region" description="Low complexity" evidence="3">
    <location>
        <begin position="145"/>
        <end position="157"/>
    </location>
</feature>
<feature type="compositionally biased region" description="Basic and acidic residues" evidence="3">
    <location>
        <begin position="159"/>
        <end position="174"/>
    </location>
</feature>
<feature type="site" description="Important for catalytic activity" evidence="2 4">
    <location>
        <position position="428"/>
    </location>
</feature>
<feature type="mutagenesis site" description="Lack of activity." evidence="4">
    <original>E</original>
    <variation>A</variation>
    <variation>Q</variation>
    <location>
        <position position="428"/>
    </location>
</feature>
<feature type="mutagenesis site" description="Decreased endolytic transglycosylase activity. Grows slightly slower and forms cells of shorter lengths and greater sphericity. In unencapsulated strains, suppresses the requirement for essential genes that mediate peripheral PG synthesis." evidence="4">
    <original>Y</original>
    <variation>D</variation>
    <location>
        <position position="488"/>
    </location>
</feature>
<protein>
    <recommendedName>
        <fullName evidence="2 6">Endolytic murein transglycosylase</fullName>
        <ecNumber evidence="1 2">4.2.2.29</ecNumber>
    </recommendedName>
    <alternativeName>
        <fullName evidence="2">Peptidoglycan lytic transglycosylase</fullName>
    </alternativeName>
    <alternativeName>
        <fullName evidence="2">Peptidoglycan polymerization terminase</fullName>
    </alternativeName>
</protein>